<evidence type="ECO:0000255" key="1">
    <source>
        <dbReference type="HAMAP-Rule" id="MF_00161"/>
    </source>
</evidence>
<feature type="chain" id="PRO_0000178837" description="Lipoprotein signal peptidase">
    <location>
        <begin position="1"/>
        <end position="169"/>
    </location>
</feature>
<feature type="transmembrane region" description="Helical" evidence="1">
    <location>
        <begin position="4"/>
        <end position="24"/>
    </location>
</feature>
<feature type="transmembrane region" description="Helical" evidence="1">
    <location>
        <begin position="29"/>
        <end position="49"/>
    </location>
</feature>
<feature type="transmembrane region" description="Helical" evidence="1">
    <location>
        <begin position="70"/>
        <end position="90"/>
    </location>
</feature>
<feature type="transmembrane region" description="Helical" evidence="1">
    <location>
        <begin position="101"/>
        <end position="121"/>
    </location>
</feature>
<feature type="transmembrane region" description="Helical" evidence="1">
    <location>
        <begin position="137"/>
        <end position="157"/>
    </location>
</feature>
<feature type="active site" evidence="1">
    <location>
        <position position="123"/>
    </location>
</feature>
<feature type="active site" evidence="1">
    <location>
        <position position="141"/>
    </location>
</feature>
<gene>
    <name evidence="1" type="primary">lspA</name>
    <name type="ordered locus">YPO0476</name>
    <name type="ordered locus">y3699</name>
    <name type="ordered locus">YP_3704</name>
</gene>
<sequence length="169" mass="18937">MNKPICSTGLRWLWLAVVVVILDISSKQWVMAHFALYESVPLIPFFNLTYAQNFGAAFSFLADKSGWQRWFFAGIAIGISVVLMVMMYRSTAKQRLINCAYALIIGGALGNLYDRLVHGAVNDFLDFYINNWHFPTFNLADVAICIGAALVIFEGFLSPVEKNAVNNDE</sequence>
<keyword id="KW-0064">Aspartyl protease</keyword>
<keyword id="KW-0997">Cell inner membrane</keyword>
<keyword id="KW-1003">Cell membrane</keyword>
<keyword id="KW-0378">Hydrolase</keyword>
<keyword id="KW-0472">Membrane</keyword>
<keyword id="KW-0645">Protease</keyword>
<keyword id="KW-1185">Reference proteome</keyword>
<keyword id="KW-0812">Transmembrane</keyword>
<keyword id="KW-1133">Transmembrane helix</keyword>
<dbReference type="EC" id="3.4.23.36" evidence="1"/>
<dbReference type="EMBL" id="AL590842">
    <property type="protein sequence ID" value="CAL19155.1"/>
    <property type="molecule type" value="Genomic_DNA"/>
</dbReference>
<dbReference type="EMBL" id="AE009952">
    <property type="protein sequence ID" value="AAM87247.1"/>
    <property type="molecule type" value="Genomic_DNA"/>
</dbReference>
<dbReference type="EMBL" id="AE017042">
    <property type="protein sequence ID" value="AAS63852.1"/>
    <property type="molecule type" value="Genomic_DNA"/>
</dbReference>
<dbReference type="PIR" id="AI0058">
    <property type="entry name" value="AI0058"/>
</dbReference>
<dbReference type="RefSeq" id="WP_002210508.1">
    <property type="nucleotide sequence ID" value="NZ_WUCM01000002.1"/>
</dbReference>
<dbReference type="RefSeq" id="YP_002345548.1">
    <property type="nucleotide sequence ID" value="NC_003143.1"/>
</dbReference>
<dbReference type="SMR" id="Q8ZIL9"/>
<dbReference type="STRING" id="214092.YPO0476"/>
<dbReference type="MEROPS" id="A08.001"/>
<dbReference type="PaxDb" id="214092-YPO0476"/>
<dbReference type="DNASU" id="1148646"/>
<dbReference type="EnsemblBacteria" id="AAS63852">
    <property type="protein sequence ID" value="AAS63852"/>
    <property type="gene ID" value="YP_3704"/>
</dbReference>
<dbReference type="GeneID" id="57974134"/>
<dbReference type="KEGG" id="ype:YPO0476"/>
<dbReference type="KEGG" id="ypk:y3699"/>
<dbReference type="KEGG" id="ypm:YP_3704"/>
<dbReference type="PATRIC" id="fig|214092.21.peg.723"/>
<dbReference type="eggNOG" id="COG0597">
    <property type="taxonomic scope" value="Bacteria"/>
</dbReference>
<dbReference type="HOGENOM" id="CLU_083252_4_0_6"/>
<dbReference type="OMA" id="NRWYFPA"/>
<dbReference type="OrthoDB" id="9810259at2"/>
<dbReference type="UniPathway" id="UPA00665"/>
<dbReference type="Proteomes" id="UP000000815">
    <property type="component" value="Chromosome"/>
</dbReference>
<dbReference type="Proteomes" id="UP000001019">
    <property type="component" value="Chromosome"/>
</dbReference>
<dbReference type="Proteomes" id="UP000002490">
    <property type="component" value="Chromosome"/>
</dbReference>
<dbReference type="GO" id="GO:0005886">
    <property type="term" value="C:plasma membrane"/>
    <property type="evidence" value="ECO:0000318"/>
    <property type="project" value="GO_Central"/>
</dbReference>
<dbReference type="GO" id="GO:0004190">
    <property type="term" value="F:aspartic-type endopeptidase activity"/>
    <property type="evidence" value="ECO:0007669"/>
    <property type="project" value="UniProtKB-UniRule"/>
</dbReference>
<dbReference type="GO" id="GO:0004175">
    <property type="term" value="F:endopeptidase activity"/>
    <property type="evidence" value="ECO:0000318"/>
    <property type="project" value="GO_Central"/>
</dbReference>
<dbReference type="GO" id="GO:0006508">
    <property type="term" value="P:proteolysis"/>
    <property type="evidence" value="ECO:0007669"/>
    <property type="project" value="UniProtKB-KW"/>
</dbReference>
<dbReference type="HAMAP" id="MF_00161">
    <property type="entry name" value="LspA"/>
    <property type="match status" value="1"/>
</dbReference>
<dbReference type="InterPro" id="IPR001872">
    <property type="entry name" value="Peptidase_A8"/>
</dbReference>
<dbReference type="NCBIfam" id="TIGR00077">
    <property type="entry name" value="lspA"/>
    <property type="match status" value="1"/>
</dbReference>
<dbReference type="PANTHER" id="PTHR33695">
    <property type="entry name" value="LIPOPROTEIN SIGNAL PEPTIDASE"/>
    <property type="match status" value="1"/>
</dbReference>
<dbReference type="PANTHER" id="PTHR33695:SF1">
    <property type="entry name" value="LIPOPROTEIN SIGNAL PEPTIDASE"/>
    <property type="match status" value="1"/>
</dbReference>
<dbReference type="Pfam" id="PF01252">
    <property type="entry name" value="Peptidase_A8"/>
    <property type="match status" value="1"/>
</dbReference>
<dbReference type="PRINTS" id="PR00781">
    <property type="entry name" value="LIPOSIGPTASE"/>
</dbReference>
<dbReference type="PROSITE" id="PS00855">
    <property type="entry name" value="SPASE_II"/>
    <property type="match status" value="1"/>
</dbReference>
<reference key="1">
    <citation type="journal article" date="2001" name="Nature">
        <title>Genome sequence of Yersinia pestis, the causative agent of plague.</title>
        <authorList>
            <person name="Parkhill J."/>
            <person name="Wren B.W."/>
            <person name="Thomson N.R."/>
            <person name="Titball R.W."/>
            <person name="Holden M.T.G."/>
            <person name="Prentice M.B."/>
            <person name="Sebaihia M."/>
            <person name="James K.D."/>
            <person name="Churcher C.M."/>
            <person name="Mungall K.L."/>
            <person name="Baker S."/>
            <person name="Basham D."/>
            <person name="Bentley S.D."/>
            <person name="Brooks K."/>
            <person name="Cerdeno-Tarraga A.-M."/>
            <person name="Chillingworth T."/>
            <person name="Cronin A."/>
            <person name="Davies R.M."/>
            <person name="Davis P."/>
            <person name="Dougan G."/>
            <person name="Feltwell T."/>
            <person name="Hamlin N."/>
            <person name="Holroyd S."/>
            <person name="Jagels K."/>
            <person name="Karlyshev A.V."/>
            <person name="Leather S."/>
            <person name="Moule S."/>
            <person name="Oyston P.C.F."/>
            <person name="Quail M.A."/>
            <person name="Rutherford K.M."/>
            <person name="Simmonds M."/>
            <person name="Skelton J."/>
            <person name="Stevens K."/>
            <person name="Whitehead S."/>
            <person name="Barrell B.G."/>
        </authorList>
    </citation>
    <scope>NUCLEOTIDE SEQUENCE [LARGE SCALE GENOMIC DNA]</scope>
    <source>
        <strain>CO-92 / Biovar Orientalis</strain>
    </source>
</reference>
<reference key="2">
    <citation type="journal article" date="2002" name="J. Bacteriol.">
        <title>Genome sequence of Yersinia pestis KIM.</title>
        <authorList>
            <person name="Deng W."/>
            <person name="Burland V."/>
            <person name="Plunkett G. III"/>
            <person name="Boutin A."/>
            <person name="Mayhew G.F."/>
            <person name="Liss P."/>
            <person name="Perna N.T."/>
            <person name="Rose D.J."/>
            <person name="Mau B."/>
            <person name="Zhou S."/>
            <person name="Schwartz D.C."/>
            <person name="Fetherston J.D."/>
            <person name="Lindler L.E."/>
            <person name="Brubaker R.R."/>
            <person name="Plano G.V."/>
            <person name="Straley S.C."/>
            <person name="McDonough K.A."/>
            <person name="Nilles M.L."/>
            <person name="Matson J.S."/>
            <person name="Blattner F.R."/>
            <person name="Perry R.D."/>
        </authorList>
    </citation>
    <scope>NUCLEOTIDE SEQUENCE [LARGE SCALE GENOMIC DNA]</scope>
    <source>
        <strain>KIM10+ / Biovar Mediaevalis</strain>
    </source>
</reference>
<reference key="3">
    <citation type="journal article" date="2004" name="DNA Res.">
        <title>Complete genome sequence of Yersinia pestis strain 91001, an isolate avirulent to humans.</title>
        <authorList>
            <person name="Song Y."/>
            <person name="Tong Z."/>
            <person name="Wang J."/>
            <person name="Wang L."/>
            <person name="Guo Z."/>
            <person name="Han Y."/>
            <person name="Zhang J."/>
            <person name="Pei D."/>
            <person name="Zhou D."/>
            <person name="Qin H."/>
            <person name="Pang X."/>
            <person name="Han Y."/>
            <person name="Zhai J."/>
            <person name="Li M."/>
            <person name="Cui B."/>
            <person name="Qi Z."/>
            <person name="Jin L."/>
            <person name="Dai R."/>
            <person name="Chen F."/>
            <person name="Li S."/>
            <person name="Ye C."/>
            <person name="Du Z."/>
            <person name="Lin W."/>
            <person name="Wang J."/>
            <person name="Yu J."/>
            <person name="Yang H."/>
            <person name="Wang J."/>
            <person name="Huang P."/>
            <person name="Yang R."/>
        </authorList>
    </citation>
    <scope>NUCLEOTIDE SEQUENCE [LARGE SCALE GENOMIC DNA]</scope>
    <source>
        <strain>91001 / Biovar Mediaevalis</strain>
    </source>
</reference>
<protein>
    <recommendedName>
        <fullName evidence="1">Lipoprotein signal peptidase</fullName>
        <ecNumber evidence="1">3.4.23.36</ecNumber>
    </recommendedName>
    <alternativeName>
        <fullName evidence="1">Prolipoprotein signal peptidase</fullName>
    </alternativeName>
    <alternativeName>
        <fullName evidence="1">Signal peptidase II</fullName>
        <shortName evidence="1">SPase II</shortName>
    </alternativeName>
</protein>
<accession>Q8ZIL9</accession>
<accession>Q0WJJ0</accession>
<comment type="function">
    <text evidence="1">This protein specifically catalyzes the removal of signal peptides from prolipoproteins.</text>
</comment>
<comment type="catalytic activity">
    <reaction evidence="1">
        <text>Release of signal peptides from bacterial membrane prolipoproteins. Hydrolyzes -Xaa-Yaa-Zaa-|-(S,diacylglyceryl)Cys-, in which Xaa is hydrophobic (preferably Leu), and Yaa (Ala or Ser) and Zaa (Gly or Ala) have small, neutral side chains.</text>
        <dbReference type="EC" id="3.4.23.36"/>
    </reaction>
</comment>
<comment type="pathway">
    <text evidence="1">Protein modification; lipoprotein biosynthesis (signal peptide cleavage).</text>
</comment>
<comment type="subcellular location">
    <subcellularLocation>
        <location evidence="1">Cell inner membrane</location>
        <topology evidence="1">Multi-pass membrane protein</topology>
    </subcellularLocation>
</comment>
<comment type="similarity">
    <text evidence="1">Belongs to the peptidase A8 family.</text>
</comment>
<name>LSPA_YERPE</name>
<proteinExistence type="inferred from homology"/>
<organism>
    <name type="scientific">Yersinia pestis</name>
    <dbReference type="NCBI Taxonomy" id="632"/>
    <lineage>
        <taxon>Bacteria</taxon>
        <taxon>Pseudomonadati</taxon>
        <taxon>Pseudomonadota</taxon>
        <taxon>Gammaproteobacteria</taxon>
        <taxon>Enterobacterales</taxon>
        <taxon>Yersiniaceae</taxon>
        <taxon>Yersinia</taxon>
    </lineage>
</organism>